<feature type="chain" id="PRO_0000178559" description="Large ribosomal subunit protein bL28">
    <location>
        <begin position="1"/>
        <end position="62"/>
    </location>
</feature>
<dbReference type="EMBL" id="AE009948">
    <property type="protein sequence ID" value="AAM99037.1"/>
    <property type="molecule type" value="Genomic_DNA"/>
</dbReference>
<dbReference type="RefSeq" id="NP_687165.1">
    <property type="nucleotide sequence ID" value="NC_004116.1"/>
</dbReference>
<dbReference type="RefSeq" id="WP_001140949.1">
    <property type="nucleotide sequence ID" value="NC_004116.1"/>
</dbReference>
<dbReference type="SMR" id="Q8E268"/>
<dbReference type="STRING" id="208435.SAG0129"/>
<dbReference type="GeneID" id="66885106"/>
<dbReference type="KEGG" id="sag:SAG0129"/>
<dbReference type="PATRIC" id="fig|208435.3.peg.127"/>
<dbReference type="HOGENOM" id="CLU_064548_7_1_9"/>
<dbReference type="OrthoDB" id="9805609at2"/>
<dbReference type="Proteomes" id="UP000000821">
    <property type="component" value="Chromosome"/>
</dbReference>
<dbReference type="GO" id="GO:1990904">
    <property type="term" value="C:ribonucleoprotein complex"/>
    <property type="evidence" value="ECO:0007669"/>
    <property type="project" value="UniProtKB-KW"/>
</dbReference>
<dbReference type="GO" id="GO:0005840">
    <property type="term" value="C:ribosome"/>
    <property type="evidence" value="ECO:0007669"/>
    <property type="project" value="UniProtKB-KW"/>
</dbReference>
<dbReference type="GO" id="GO:0003735">
    <property type="term" value="F:structural constituent of ribosome"/>
    <property type="evidence" value="ECO:0007669"/>
    <property type="project" value="InterPro"/>
</dbReference>
<dbReference type="GO" id="GO:0006412">
    <property type="term" value="P:translation"/>
    <property type="evidence" value="ECO:0007669"/>
    <property type="project" value="UniProtKB-UniRule"/>
</dbReference>
<dbReference type="Gene3D" id="2.30.170.40">
    <property type="entry name" value="Ribosomal protein L28/L24"/>
    <property type="match status" value="1"/>
</dbReference>
<dbReference type="HAMAP" id="MF_00373">
    <property type="entry name" value="Ribosomal_bL28"/>
    <property type="match status" value="1"/>
</dbReference>
<dbReference type="InterPro" id="IPR050096">
    <property type="entry name" value="Bacterial_rp_bL28"/>
</dbReference>
<dbReference type="InterPro" id="IPR026569">
    <property type="entry name" value="Ribosomal_bL28"/>
</dbReference>
<dbReference type="InterPro" id="IPR034704">
    <property type="entry name" value="Ribosomal_bL28/bL31-like_sf"/>
</dbReference>
<dbReference type="InterPro" id="IPR001383">
    <property type="entry name" value="Ribosomal_bL28_bact-type"/>
</dbReference>
<dbReference type="InterPro" id="IPR037147">
    <property type="entry name" value="Ribosomal_bL28_sf"/>
</dbReference>
<dbReference type="NCBIfam" id="TIGR00009">
    <property type="entry name" value="L28"/>
    <property type="match status" value="1"/>
</dbReference>
<dbReference type="PANTHER" id="PTHR39080">
    <property type="entry name" value="50S RIBOSOMAL PROTEIN L28"/>
    <property type="match status" value="1"/>
</dbReference>
<dbReference type="PANTHER" id="PTHR39080:SF1">
    <property type="entry name" value="LARGE RIBOSOMAL SUBUNIT PROTEIN BL28A"/>
    <property type="match status" value="1"/>
</dbReference>
<dbReference type="Pfam" id="PF00830">
    <property type="entry name" value="Ribosomal_L28"/>
    <property type="match status" value="1"/>
</dbReference>
<dbReference type="SUPFAM" id="SSF143800">
    <property type="entry name" value="L28p-like"/>
    <property type="match status" value="1"/>
</dbReference>
<organism>
    <name type="scientific">Streptococcus agalactiae serotype V (strain ATCC BAA-611 / 2603 V/R)</name>
    <dbReference type="NCBI Taxonomy" id="208435"/>
    <lineage>
        <taxon>Bacteria</taxon>
        <taxon>Bacillati</taxon>
        <taxon>Bacillota</taxon>
        <taxon>Bacilli</taxon>
        <taxon>Lactobacillales</taxon>
        <taxon>Streptococcaceae</taxon>
        <taxon>Streptococcus</taxon>
    </lineage>
</organism>
<gene>
    <name evidence="1" type="primary">rpmB</name>
    <name type="ordered locus">SAG0129</name>
</gene>
<protein>
    <recommendedName>
        <fullName evidence="1">Large ribosomal subunit protein bL28</fullName>
    </recommendedName>
    <alternativeName>
        <fullName evidence="2">50S ribosomal protein L28</fullName>
    </alternativeName>
</protein>
<evidence type="ECO:0000255" key="1">
    <source>
        <dbReference type="HAMAP-Rule" id="MF_00373"/>
    </source>
</evidence>
<evidence type="ECO:0000305" key="2"/>
<accession>Q8E268</accession>
<comment type="similarity">
    <text evidence="1">Belongs to the bacterial ribosomal protein bL28 family.</text>
</comment>
<reference key="1">
    <citation type="journal article" date="2002" name="Proc. Natl. Acad. Sci. U.S.A.">
        <title>Complete genome sequence and comparative genomic analysis of an emerging human pathogen, serotype V Streptococcus agalactiae.</title>
        <authorList>
            <person name="Tettelin H."/>
            <person name="Masignani V."/>
            <person name="Cieslewicz M.J."/>
            <person name="Eisen J.A."/>
            <person name="Peterson S.N."/>
            <person name="Wessels M.R."/>
            <person name="Paulsen I.T."/>
            <person name="Nelson K.E."/>
            <person name="Margarit I."/>
            <person name="Read T.D."/>
            <person name="Madoff L.C."/>
            <person name="Wolf A.M."/>
            <person name="Beanan M.J."/>
            <person name="Brinkac L.M."/>
            <person name="Daugherty S.C."/>
            <person name="DeBoy R.T."/>
            <person name="Durkin A.S."/>
            <person name="Kolonay J.F."/>
            <person name="Madupu R."/>
            <person name="Lewis M.R."/>
            <person name="Radune D."/>
            <person name="Fedorova N.B."/>
            <person name="Scanlan D."/>
            <person name="Khouri H.M."/>
            <person name="Mulligan S."/>
            <person name="Carty H.A."/>
            <person name="Cline R.T."/>
            <person name="Van Aken S.E."/>
            <person name="Gill J."/>
            <person name="Scarselli M."/>
            <person name="Mora M."/>
            <person name="Iacobini E.T."/>
            <person name="Brettoni C."/>
            <person name="Galli G."/>
            <person name="Mariani M."/>
            <person name="Vegni F."/>
            <person name="Maione D."/>
            <person name="Rinaudo D."/>
            <person name="Rappuoli R."/>
            <person name="Telford J.L."/>
            <person name="Kasper D.L."/>
            <person name="Grandi G."/>
            <person name="Fraser C.M."/>
        </authorList>
    </citation>
    <scope>NUCLEOTIDE SEQUENCE [LARGE SCALE GENOMIC DNA]</scope>
    <source>
        <strain>ATCC BAA-611 / 2603 V/R</strain>
    </source>
</reference>
<proteinExistence type="inferred from homology"/>
<name>RL28_STRA5</name>
<sequence length="62" mass="6942">MAKVCYFTGRKTVSGNNRSHAMNQTKRTVKPNLQKVTVLIDGKPKKVWVSARALKSGKVERV</sequence>
<keyword id="KW-1185">Reference proteome</keyword>
<keyword id="KW-0687">Ribonucleoprotein</keyword>
<keyword id="KW-0689">Ribosomal protein</keyword>